<gene>
    <name evidence="1" type="primary">panD</name>
    <name type="ordered locus">BAV2368</name>
</gene>
<name>PAND_BORA1</name>
<accession>Q2KY48</accession>
<dbReference type="EC" id="4.1.1.11" evidence="1"/>
<dbReference type="EMBL" id="AM167904">
    <property type="protein sequence ID" value="CAJ49978.1"/>
    <property type="molecule type" value="Genomic_DNA"/>
</dbReference>
<dbReference type="RefSeq" id="WP_012418029.1">
    <property type="nucleotide sequence ID" value="NC_010645.1"/>
</dbReference>
<dbReference type="SMR" id="Q2KY48"/>
<dbReference type="STRING" id="360910.BAV2368"/>
<dbReference type="GeneID" id="92934457"/>
<dbReference type="KEGG" id="bav:BAV2368"/>
<dbReference type="eggNOG" id="COG0853">
    <property type="taxonomic scope" value="Bacteria"/>
</dbReference>
<dbReference type="HOGENOM" id="CLU_115305_2_1_4"/>
<dbReference type="OrthoDB" id="9803983at2"/>
<dbReference type="UniPathway" id="UPA00028">
    <property type="reaction ID" value="UER00002"/>
</dbReference>
<dbReference type="Proteomes" id="UP000001977">
    <property type="component" value="Chromosome"/>
</dbReference>
<dbReference type="GO" id="GO:0005829">
    <property type="term" value="C:cytosol"/>
    <property type="evidence" value="ECO:0007669"/>
    <property type="project" value="TreeGrafter"/>
</dbReference>
<dbReference type="GO" id="GO:0004068">
    <property type="term" value="F:aspartate 1-decarboxylase activity"/>
    <property type="evidence" value="ECO:0007669"/>
    <property type="project" value="UniProtKB-UniRule"/>
</dbReference>
<dbReference type="GO" id="GO:0006523">
    <property type="term" value="P:alanine biosynthetic process"/>
    <property type="evidence" value="ECO:0007669"/>
    <property type="project" value="InterPro"/>
</dbReference>
<dbReference type="GO" id="GO:0015940">
    <property type="term" value="P:pantothenate biosynthetic process"/>
    <property type="evidence" value="ECO:0007669"/>
    <property type="project" value="UniProtKB-UniRule"/>
</dbReference>
<dbReference type="CDD" id="cd06919">
    <property type="entry name" value="Asp_decarbox"/>
    <property type="match status" value="1"/>
</dbReference>
<dbReference type="Gene3D" id="2.40.40.20">
    <property type="match status" value="1"/>
</dbReference>
<dbReference type="HAMAP" id="MF_00446">
    <property type="entry name" value="PanD"/>
    <property type="match status" value="1"/>
</dbReference>
<dbReference type="InterPro" id="IPR009010">
    <property type="entry name" value="Asp_de-COase-like_dom_sf"/>
</dbReference>
<dbReference type="InterPro" id="IPR003190">
    <property type="entry name" value="Asp_decarbox"/>
</dbReference>
<dbReference type="NCBIfam" id="TIGR00223">
    <property type="entry name" value="panD"/>
    <property type="match status" value="1"/>
</dbReference>
<dbReference type="PANTHER" id="PTHR21012">
    <property type="entry name" value="ASPARTATE 1-DECARBOXYLASE"/>
    <property type="match status" value="1"/>
</dbReference>
<dbReference type="PANTHER" id="PTHR21012:SF0">
    <property type="entry name" value="ASPARTATE 1-DECARBOXYLASE"/>
    <property type="match status" value="1"/>
</dbReference>
<dbReference type="Pfam" id="PF02261">
    <property type="entry name" value="Asp_decarbox"/>
    <property type="match status" value="1"/>
</dbReference>
<dbReference type="PIRSF" id="PIRSF006246">
    <property type="entry name" value="Asp_decarbox"/>
    <property type="match status" value="1"/>
</dbReference>
<dbReference type="SUPFAM" id="SSF50692">
    <property type="entry name" value="ADC-like"/>
    <property type="match status" value="1"/>
</dbReference>
<comment type="function">
    <text evidence="1">Catalyzes the pyruvoyl-dependent decarboxylation of aspartate to produce beta-alanine.</text>
</comment>
<comment type="catalytic activity">
    <reaction evidence="1">
        <text>L-aspartate + H(+) = beta-alanine + CO2</text>
        <dbReference type="Rhea" id="RHEA:19497"/>
        <dbReference type="ChEBI" id="CHEBI:15378"/>
        <dbReference type="ChEBI" id="CHEBI:16526"/>
        <dbReference type="ChEBI" id="CHEBI:29991"/>
        <dbReference type="ChEBI" id="CHEBI:57966"/>
        <dbReference type="EC" id="4.1.1.11"/>
    </reaction>
</comment>
<comment type="cofactor">
    <cofactor evidence="1">
        <name>pyruvate</name>
        <dbReference type="ChEBI" id="CHEBI:15361"/>
    </cofactor>
    <text evidence="1">Binds 1 pyruvoyl group covalently per subunit.</text>
</comment>
<comment type="pathway">
    <text evidence="1">Cofactor biosynthesis; (R)-pantothenate biosynthesis; beta-alanine from L-aspartate: step 1/1.</text>
</comment>
<comment type="subunit">
    <text evidence="1">Heterooctamer of four alpha and four beta subunits.</text>
</comment>
<comment type="subcellular location">
    <subcellularLocation>
        <location evidence="1">Cytoplasm</location>
    </subcellularLocation>
</comment>
<comment type="PTM">
    <text evidence="1">Is synthesized initially as an inactive proenzyme, which is activated by self-cleavage at a specific serine bond to produce a beta-subunit with a hydroxyl group at its C-terminus and an alpha-subunit with a pyruvoyl group at its N-terminus.</text>
</comment>
<comment type="similarity">
    <text evidence="1">Belongs to the PanD family.</text>
</comment>
<protein>
    <recommendedName>
        <fullName evidence="1">Aspartate 1-decarboxylase</fullName>
        <ecNumber evidence="1">4.1.1.11</ecNumber>
    </recommendedName>
    <alternativeName>
        <fullName evidence="1">Aspartate alpha-decarboxylase</fullName>
    </alternativeName>
    <component>
        <recommendedName>
            <fullName evidence="1">Aspartate 1-decarboxylase beta chain</fullName>
        </recommendedName>
    </component>
    <component>
        <recommendedName>
            <fullName evidence="1">Aspartate 1-decarboxylase alpha chain</fullName>
        </recommendedName>
    </component>
</protein>
<evidence type="ECO:0000255" key="1">
    <source>
        <dbReference type="HAMAP-Rule" id="MF_00446"/>
    </source>
</evidence>
<organism>
    <name type="scientific">Bordetella avium (strain 197N)</name>
    <dbReference type="NCBI Taxonomy" id="360910"/>
    <lineage>
        <taxon>Bacteria</taxon>
        <taxon>Pseudomonadati</taxon>
        <taxon>Pseudomonadota</taxon>
        <taxon>Betaproteobacteria</taxon>
        <taxon>Burkholderiales</taxon>
        <taxon>Alcaligenaceae</taxon>
        <taxon>Bordetella</taxon>
    </lineage>
</organism>
<keyword id="KW-0068">Autocatalytic cleavage</keyword>
<keyword id="KW-0963">Cytoplasm</keyword>
<keyword id="KW-0210">Decarboxylase</keyword>
<keyword id="KW-0456">Lyase</keyword>
<keyword id="KW-0566">Pantothenate biosynthesis</keyword>
<keyword id="KW-0670">Pyruvate</keyword>
<keyword id="KW-1185">Reference proteome</keyword>
<keyword id="KW-0704">Schiff base</keyword>
<keyword id="KW-0865">Zymogen</keyword>
<reference key="1">
    <citation type="journal article" date="2006" name="J. Bacteriol.">
        <title>Comparison of the genome sequence of the poultry pathogen Bordetella avium with those of B. bronchiseptica, B. pertussis, and B. parapertussis reveals extensive diversity in surface structures associated with host interaction.</title>
        <authorList>
            <person name="Sebaihia M."/>
            <person name="Preston A."/>
            <person name="Maskell D.J."/>
            <person name="Kuzmiak H."/>
            <person name="Connell T.D."/>
            <person name="King N.D."/>
            <person name="Orndorff P.E."/>
            <person name="Miyamoto D.M."/>
            <person name="Thomson N.R."/>
            <person name="Harris D."/>
            <person name="Goble A."/>
            <person name="Lord A."/>
            <person name="Murphy L."/>
            <person name="Quail M.A."/>
            <person name="Rutter S."/>
            <person name="Squares R."/>
            <person name="Squares S."/>
            <person name="Woodward J."/>
            <person name="Parkhill J."/>
            <person name="Temple L.M."/>
        </authorList>
    </citation>
    <scope>NUCLEOTIDE SEQUENCE [LARGE SCALE GENOMIC DNA]</scope>
    <source>
        <strain>197N</strain>
    </source>
</reference>
<sequence>MQRIMLRAKLHRVTVTEADLHYEGSCGIDEDLLDAAGMREFERIELYNVTNGERFDTYIIKAARGSGAISLNGAAARRAQVGDLMIICTYGPMSEEESATHKPKVVLVDDANRVKEIRKFPA</sequence>
<proteinExistence type="inferred from homology"/>
<feature type="chain" id="PRO_0000236851" description="Aspartate 1-decarboxylase beta chain" evidence="1">
    <location>
        <begin position="1"/>
        <end position="24"/>
    </location>
</feature>
<feature type="chain" id="PRO_0000236852" description="Aspartate 1-decarboxylase alpha chain" evidence="1">
    <location>
        <begin position="25"/>
        <end position="122"/>
    </location>
</feature>
<feature type="active site" description="Schiff-base intermediate with substrate; via pyruvic acid" evidence="1">
    <location>
        <position position="25"/>
    </location>
</feature>
<feature type="active site" description="Proton donor" evidence="1">
    <location>
        <position position="58"/>
    </location>
</feature>
<feature type="binding site" evidence="1">
    <location>
        <position position="57"/>
    </location>
    <ligand>
        <name>substrate</name>
    </ligand>
</feature>
<feature type="binding site" evidence="1">
    <location>
        <begin position="73"/>
        <end position="75"/>
    </location>
    <ligand>
        <name>substrate</name>
    </ligand>
</feature>
<feature type="modified residue" description="Pyruvic acid (Ser)" evidence="1">
    <location>
        <position position="25"/>
    </location>
</feature>